<reference key="1">
    <citation type="journal article" date="2000" name="Nature">
        <title>Sequence and analysis of chromosome 5 of the plant Arabidopsis thaliana.</title>
        <authorList>
            <person name="Tabata S."/>
            <person name="Kaneko T."/>
            <person name="Nakamura Y."/>
            <person name="Kotani H."/>
            <person name="Kato T."/>
            <person name="Asamizu E."/>
            <person name="Miyajima N."/>
            <person name="Sasamoto S."/>
            <person name="Kimura T."/>
            <person name="Hosouchi T."/>
            <person name="Kawashima K."/>
            <person name="Kohara M."/>
            <person name="Matsumoto M."/>
            <person name="Matsuno A."/>
            <person name="Muraki A."/>
            <person name="Nakayama S."/>
            <person name="Nakazaki N."/>
            <person name="Naruo K."/>
            <person name="Okumura S."/>
            <person name="Shinpo S."/>
            <person name="Takeuchi C."/>
            <person name="Wada T."/>
            <person name="Watanabe A."/>
            <person name="Yamada M."/>
            <person name="Yasuda M."/>
            <person name="Sato S."/>
            <person name="de la Bastide M."/>
            <person name="Huang E."/>
            <person name="Spiegel L."/>
            <person name="Gnoj L."/>
            <person name="O'Shaughnessy A."/>
            <person name="Preston R."/>
            <person name="Habermann K."/>
            <person name="Murray J."/>
            <person name="Johnson D."/>
            <person name="Rohlfing T."/>
            <person name="Nelson J."/>
            <person name="Stoneking T."/>
            <person name="Pepin K."/>
            <person name="Spieth J."/>
            <person name="Sekhon M."/>
            <person name="Armstrong J."/>
            <person name="Becker M."/>
            <person name="Belter E."/>
            <person name="Cordum H."/>
            <person name="Cordes M."/>
            <person name="Courtney L."/>
            <person name="Courtney W."/>
            <person name="Dante M."/>
            <person name="Du H."/>
            <person name="Edwards J."/>
            <person name="Fryman J."/>
            <person name="Haakensen B."/>
            <person name="Lamar E."/>
            <person name="Latreille P."/>
            <person name="Leonard S."/>
            <person name="Meyer R."/>
            <person name="Mulvaney E."/>
            <person name="Ozersky P."/>
            <person name="Riley A."/>
            <person name="Strowmatt C."/>
            <person name="Wagner-McPherson C."/>
            <person name="Wollam A."/>
            <person name="Yoakum M."/>
            <person name="Bell M."/>
            <person name="Dedhia N."/>
            <person name="Parnell L."/>
            <person name="Shah R."/>
            <person name="Rodriguez M."/>
            <person name="Hoon See L."/>
            <person name="Vil D."/>
            <person name="Baker J."/>
            <person name="Kirchoff K."/>
            <person name="Toth K."/>
            <person name="King L."/>
            <person name="Bahret A."/>
            <person name="Miller B."/>
            <person name="Marra M.A."/>
            <person name="Martienssen R."/>
            <person name="McCombie W.R."/>
            <person name="Wilson R.K."/>
            <person name="Murphy G."/>
            <person name="Bancroft I."/>
            <person name="Volckaert G."/>
            <person name="Wambutt R."/>
            <person name="Duesterhoeft A."/>
            <person name="Stiekema W."/>
            <person name="Pohl T."/>
            <person name="Entian K.-D."/>
            <person name="Terryn N."/>
            <person name="Hartley N."/>
            <person name="Bent E."/>
            <person name="Johnson S."/>
            <person name="Langham S.-A."/>
            <person name="McCullagh B."/>
            <person name="Robben J."/>
            <person name="Grymonprez B."/>
            <person name="Zimmermann W."/>
            <person name="Ramsperger U."/>
            <person name="Wedler H."/>
            <person name="Balke K."/>
            <person name="Wedler E."/>
            <person name="Peters S."/>
            <person name="van Staveren M."/>
            <person name="Dirkse W."/>
            <person name="Mooijman P."/>
            <person name="Klein Lankhorst R."/>
            <person name="Weitzenegger T."/>
            <person name="Bothe G."/>
            <person name="Rose M."/>
            <person name="Hauf J."/>
            <person name="Berneiser S."/>
            <person name="Hempel S."/>
            <person name="Feldpausch M."/>
            <person name="Lamberth S."/>
            <person name="Villarroel R."/>
            <person name="Gielen J."/>
            <person name="Ardiles W."/>
            <person name="Bents O."/>
            <person name="Lemcke K."/>
            <person name="Kolesov G."/>
            <person name="Mayer K.F.X."/>
            <person name="Rudd S."/>
            <person name="Schoof H."/>
            <person name="Schueller C."/>
            <person name="Zaccaria P."/>
            <person name="Mewes H.-W."/>
            <person name="Bevan M."/>
            <person name="Fransz P.F."/>
        </authorList>
    </citation>
    <scope>NUCLEOTIDE SEQUENCE [LARGE SCALE GENOMIC DNA]</scope>
    <source>
        <strain>cv. Columbia</strain>
    </source>
</reference>
<reference key="2">
    <citation type="journal article" date="2017" name="Plant J.">
        <title>Araport11: a complete reannotation of the Arabidopsis thaliana reference genome.</title>
        <authorList>
            <person name="Cheng C.Y."/>
            <person name="Krishnakumar V."/>
            <person name="Chan A.P."/>
            <person name="Thibaud-Nissen F."/>
            <person name="Schobel S."/>
            <person name="Town C.D."/>
        </authorList>
    </citation>
    <scope>GENOME REANNOTATION</scope>
    <source>
        <strain>cv. Columbia</strain>
    </source>
</reference>
<reference key="3">
    <citation type="journal article" date="2008" name="Mol. Plant">
        <title>GEX3, expressed in the male gametophyte and in the egg cell of Arabidopsis thaliana, is essential for micropylar pollen tube guidance and plays a role during early embryogenesis.</title>
        <authorList>
            <person name="Alandete-Saez M."/>
            <person name="Ron M."/>
            <person name="McCormick S."/>
        </authorList>
    </citation>
    <scope>FUNCTION</scope>
    <scope>SUBCELLULAR LOCATION</scope>
    <scope>TISSUE SPECIFICITY</scope>
</reference>
<gene>
    <name type="primary">GEX3</name>
    <name type="ordered locus">At5g16020</name>
    <name type="ORF">F1N13.160</name>
</gene>
<evidence type="ECO:0000255" key="1"/>
<evidence type="ECO:0000256" key="2">
    <source>
        <dbReference type="SAM" id="MobiDB-lite"/>
    </source>
</evidence>
<evidence type="ECO:0000269" key="3">
    <source>
    </source>
</evidence>
<proteinExistence type="evidence at transcript level"/>
<organism>
    <name type="scientific">Arabidopsis thaliana</name>
    <name type="common">Mouse-ear cress</name>
    <dbReference type="NCBI Taxonomy" id="3702"/>
    <lineage>
        <taxon>Eukaryota</taxon>
        <taxon>Viridiplantae</taxon>
        <taxon>Streptophyta</taxon>
        <taxon>Embryophyta</taxon>
        <taxon>Tracheophyta</taxon>
        <taxon>Spermatophyta</taxon>
        <taxon>Magnoliopsida</taxon>
        <taxon>eudicotyledons</taxon>
        <taxon>Gunneridae</taxon>
        <taxon>Pentapetalae</taxon>
        <taxon>rosids</taxon>
        <taxon>malvids</taxon>
        <taxon>Brassicales</taxon>
        <taxon>Brassicaceae</taxon>
        <taxon>Camelineae</taxon>
        <taxon>Arabidopsis</taxon>
    </lineage>
</organism>
<keyword id="KW-1003">Cell membrane</keyword>
<keyword id="KW-0472">Membrane</keyword>
<keyword id="KW-1185">Reference proteome</keyword>
<keyword id="KW-0732">Signal</keyword>
<keyword id="KW-0812">Transmembrane</keyword>
<keyword id="KW-1133">Transmembrane helix</keyword>
<name>GEX3_ARATH</name>
<dbReference type="EMBL" id="AL391145">
    <property type="protein sequence ID" value="CAC01801.1"/>
    <property type="molecule type" value="Genomic_DNA"/>
</dbReference>
<dbReference type="EMBL" id="CP002688">
    <property type="protein sequence ID" value="AED92235.1"/>
    <property type="molecule type" value="Genomic_DNA"/>
</dbReference>
<dbReference type="PIR" id="T51385">
    <property type="entry name" value="T51385"/>
</dbReference>
<dbReference type="RefSeq" id="NP_197106.1">
    <property type="nucleotide sequence ID" value="NM_121607.2"/>
</dbReference>
<dbReference type="SMR" id="Q9LFS2"/>
<dbReference type="BioGRID" id="16735">
    <property type="interactions" value="1"/>
</dbReference>
<dbReference type="STRING" id="3702.Q9LFS2"/>
<dbReference type="GlyGen" id="Q9LFS2">
    <property type="glycosylation" value="1 site"/>
</dbReference>
<dbReference type="PaxDb" id="3702-AT5G16020.1"/>
<dbReference type="ProteomicsDB" id="220735"/>
<dbReference type="EnsemblPlants" id="AT5G16020.1">
    <property type="protein sequence ID" value="AT5G16020.1"/>
    <property type="gene ID" value="AT5G16020"/>
</dbReference>
<dbReference type="GeneID" id="831459"/>
<dbReference type="Gramene" id="AT5G16020.1">
    <property type="protein sequence ID" value="AT5G16020.1"/>
    <property type="gene ID" value="AT5G16020"/>
</dbReference>
<dbReference type="KEGG" id="ath:AT5G16020"/>
<dbReference type="Araport" id="AT5G16020"/>
<dbReference type="TAIR" id="AT5G16020">
    <property type="gene designation" value="GEX3"/>
</dbReference>
<dbReference type="eggNOG" id="ENOG502QSCU">
    <property type="taxonomic scope" value="Eukaryota"/>
</dbReference>
<dbReference type="HOGENOM" id="CLU_026343_1_0_1"/>
<dbReference type="InParanoid" id="Q9LFS2"/>
<dbReference type="OMA" id="ISWQQTI"/>
<dbReference type="PhylomeDB" id="Q9LFS2"/>
<dbReference type="PRO" id="PR:Q9LFS2"/>
<dbReference type="Proteomes" id="UP000006548">
    <property type="component" value="Chromosome 5"/>
</dbReference>
<dbReference type="ExpressionAtlas" id="Q9LFS2">
    <property type="expression patterns" value="baseline and differential"/>
</dbReference>
<dbReference type="GO" id="GO:0005886">
    <property type="term" value="C:plasma membrane"/>
    <property type="evidence" value="ECO:0000314"/>
    <property type="project" value="TAIR"/>
</dbReference>
<dbReference type="GO" id="GO:0099503">
    <property type="term" value="C:secretory vesicle"/>
    <property type="evidence" value="ECO:0007005"/>
    <property type="project" value="TAIR"/>
</dbReference>
<dbReference type="GO" id="GO:0009793">
    <property type="term" value="P:embryo development ending in seed dormancy"/>
    <property type="evidence" value="ECO:0000315"/>
    <property type="project" value="TAIR"/>
</dbReference>
<dbReference type="GO" id="GO:0010183">
    <property type="term" value="P:pollen tube guidance"/>
    <property type="evidence" value="ECO:0000315"/>
    <property type="project" value="TAIR"/>
</dbReference>
<dbReference type="FunFam" id="2.130.10.10:FF:001929">
    <property type="entry name" value="Protein GAMETE EXPRESSED 3"/>
    <property type="match status" value="1"/>
</dbReference>
<dbReference type="Gene3D" id="2.130.10.10">
    <property type="entry name" value="YVTN repeat-like/Quinoprotein amine dehydrogenase"/>
    <property type="match status" value="1"/>
</dbReference>
<dbReference type="InterPro" id="IPR045301">
    <property type="entry name" value="GEX3-like"/>
</dbReference>
<dbReference type="InterPro" id="IPR011047">
    <property type="entry name" value="Quinoprotein_ADH-like_sf"/>
</dbReference>
<dbReference type="InterPro" id="IPR015943">
    <property type="entry name" value="WD40/YVTN_repeat-like_dom_sf"/>
</dbReference>
<dbReference type="PANTHER" id="PTHR37253">
    <property type="entry name" value="PROTEIN GAMETE EXPRESSED 3"/>
    <property type="match status" value="1"/>
</dbReference>
<dbReference type="PANTHER" id="PTHR37253:SF1">
    <property type="entry name" value="PROTEIN GAMETE EXPRESSED 3"/>
    <property type="match status" value="1"/>
</dbReference>
<dbReference type="SUPFAM" id="SSF50998">
    <property type="entry name" value="Quinoprotein alcohol dehydrogenase-like"/>
    <property type="match status" value="1"/>
</dbReference>
<feature type="signal peptide" evidence="1">
    <location>
        <begin position="1"/>
        <end position="29"/>
    </location>
</feature>
<feature type="chain" id="PRO_0000416786" description="Protein GAMETE EXPRESSED 3">
    <location>
        <begin position="30"/>
        <end position="641"/>
    </location>
</feature>
<feature type="transmembrane region" description="Helical" evidence="1">
    <location>
        <begin position="441"/>
        <end position="461"/>
    </location>
</feature>
<feature type="region of interest" description="Disordered" evidence="2">
    <location>
        <begin position="570"/>
        <end position="627"/>
    </location>
</feature>
<feature type="compositionally biased region" description="Basic and acidic residues" evidence="2">
    <location>
        <begin position="584"/>
        <end position="593"/>
    </location>
</feature>
<feature type="compositionally biased region" description="Acidic residues" evidence="2">
    <location>
        <begin position="594"/>
        <end position="603"/>
    </location>
</feature>
<accession>Q9LFS2</accession>
<sequence>MVAFRFVYIPLPFFFFFFFFFVFFSGVSQLQDQTATKKSVRILSKILIGDDGRVYACSDNDFFSFESNGSIAWSVHMNFKCNTDFAPVYSGFNQMLLLAENRILRVIFPRNGTKSEPELFFDPGETILGFAVSVSSSSVYITVKNHGLYAYNMFRQQLWIAEPKIERFGYRLGCRKDFDNCTFNSRPVIDSCEGSIYISNNEGELYSLSLRGTYYQWIQDFSLVDRFFTVTPGNNGLVYVVFPIKSLVFALDSFSGDILWQKTIGPLAETSASDPVIDSNSWASIGSLDGTLYSFSRTGDLYKIPKNAETDSVIQIEPLLDCSGYAVYVSQTKFEGMIDRVIEDYTYVSAKKPETAVFSLVVPETRSIYWSQSYSDQIPGLLLDEDLQHFVLDERIALAFVAASSSGNPFRCRSKHEKLSSSCSFAEPEHLDIYIGNERAIIWFLLFEFVIMVLFAALVRFCFIFWKKKKLQDRPFSTFLDKRRLLHRKSREIDKTITRLQNESTANESAVDKIGDLIQKRENVKRKLSSTYSLGRDIDESKSKLKDYVLPLYGGSSRSFSYRNRENESITIFQTPSDESSSEESYRDEHYDDVADDEHDEDDLDRKQKGKLLAHSEGSSNDGDGIASSRRSIYLKHIFDD</sequence>
<comment type="function">
    <text evidence="3">Required for micropylar pollen tube guidance. Plays a role during early embryo patterning.</text>
</comment>
<comment type="subcellular location">
    <subcellularLocation>
        <location evidence="3">Cell membrane</location>
        <topology evidence="3">Single-pass membrane protein</topology>
    </subcellularLocation>
</comment>
<comment type="tissue specificity">
    <text evidence="3">Expressed in mature siliques and in pollen, mainly in the sperm cells. Detected in the egg cell within the female gametophyte.</text>
</comment>
<protein>
    <recommendedName>
        <fullName>Protein GAMETE EXPRESSED 3</fullName>
    </recommendedName>
</protein>